<name>DNAK_EHRRW</name>
<dbReference type="EMBL" id="CR767821">
    <property type="protein sequence ID" value="CAH58279.1"/>
    <property type="molecule type" value="Genomic_DNA"/>
</dbReference>
<dbReference type="EMBL" id="CR925678">
    <property type="protein sequence ID" value="CAI27071.1"/>
    <property type="molecule type" value="Genomic_DNA"/>
</dbReference>
<dbReference type="RefSeq" id="WP_011155230.1">
    <property type="nucleotide sequence ID" value="NC_005295.2"/>
</dbReference>
<dbReference type="SMR" id="Q5HAY1"/>
<dbReference type="GeneID" id="33057628"/>
<dbReference type="KEGG" id="eru:Erum5500"/>
<dbReference type="KEGG" id="erw:ERWE_CDS_05770"/>
<dbReference type="eggNOG" id="COG0443">
    <property type="taxonomic scope" value="Bacteria"/>
</dbReference>
<dbReference type="HOGENOM" id="CLU_005965_2_1_5"/>
<dbReference type="Proteomes" id="UP000001021">
    <property type="component" value="Chromosome"/>
</dbReference>
<dbReference type="GO" id="GO:0005524">
    <property type="term" value="F:ATP binding"/>
    <property type="evidence" value="ECO:0007669"/>
    <property type="project" value="UniProtKB-UniRule"/>
</dbReference>
<dbReference type="GO" id="GO:0140662">
    <property type="term" value="F:ATP-dependent protein folding chaperone"/>
    <property type="evidence" value="ECO:0007669"/>
    <property type="project" value="InterPro"/>
</dbReference>
<dbReference type="GO" id="GO:0051082">
    <property type="term" value="F:unfolded protein binding"/>
    <property type="evidence" value="ECO:0007669"/>
    <property type="project" value="InterPro"/>
</dbReference>
<dbReference type="FunFam" id="2.60.34.10:FF:000014">
    <property type="entry name" value="Chaperone protein DnaK HSP70"/>
    <property type="match status" value="1"/>
</dbReference>
<dbReference type="FunFam" id="3.30.420.40:FF:000020">
    <property type="entry name" value="Chaperone protein HscA homolog"/>
    <property type="match status" value="1"/>
</dbReference>
<dbReference type="FunFam" id="1.20.1270.10:FF:000001">
    <property type="entry name" value="Molecular chaperone DnaK"/>
    <property type="match status" value="1"/>
</dbReference>
<dbReference type="FunFam" id="3.30.420.40:FF:000004">
    <property type="entry name" value="Molecular chaperone DnaK"/>
    <property type="match status" value="1"/>
</dbReference>
<dbReference type="FunFam" id="3.90.640.10:FF:000003">
    <property type="entry name" value="Molecular chaperone DnaK"/>
    <property type="match status" value="1"/>
</dbReference>
<dbReference type="Gene3D" id="1.20.1270.10">
    <property type="match status" value="1"/>
</dbReference>
<dbReference type="Gene3D" id="3.30.420.40">
    <property type="match status" value="2"/>
</dbReference>
<dbReference type="Gene3D" id="3.90.640.10">
    <property type="entry name" value="Actin, Chain A, domain 4"/>
    <property type="match status" value="1"/>
</dbReference>
<dbReference type="Gene3D" id="2.60.34.10">
    <property type="entry name" value="Substrate Binding Domain Of DNAk, Chain A, domain 1"/>
    <property type="match status" value="1"/>
</dbReference>
<dbReference type="HAMAP" id="MF_00332">
    <property type="entry name" value="DnaK"/>
    <property type="match status" value="1"/>
</dbReference>
<dbReference type="InterPro" id="IPR043129">
    <property type="entry name" value="ATPase_NBD"/>
</dbReference>
<dbReference type="InterPro" id="IPR012725">
    <property type="entry name" value="Chaperone_DnaK"/>
</dbReference>
<dbReference type="InterPro" id="IPR018181">
    <property type="entry name" value="Heat_shock_70_CS"/>
</dbReference>
<dbReference type="InterPro" id="IPR029048">
    <property type="entry name" value="HSP70_C_sf"/>
</dbReference>
<dbReference type="InterPro" id="IPR029047">
    <property type="entry name" value="HSP70_peptide-bd_sf"/>
</dbReference>
<dbReference type="InterPro" id="IPR013126">
    <property type="entry name" value="Hsp_70_fam"/>
</dbReference>
<dbReference type="NCBIfam" id="NF001413">
    <property type="entry name" value="PRK00290.1"/>
    <property type="match status" value="1"/>
</dbReference>
<dbReference type="NCBIfam" id="NF003520">
    <property type="entry name" value="PRK05183.1"/>
    <property type="match status" value="1"/>
</dbReference>
<dbReference type="NCBIfam" id="TIGR02350">
    <property type="entry name" value="prok_dnaK"/>
    <property type="match status" value="1"/>
</dbReference>
<dbReference type="PANTHER" id="PTHR19375">
    <property type="entry name" value="HEAT SHOCK PROTEIN 70KDA"/>
    <property type="match status" value="1"/>
</dbReference>
<dbReference type="Pfam" id="PF00012">
    <property type="entry name" value="HSP70"/>
    <property type="match status" value="1"/>
</dbReference>
<dbReference type="PRINTS" id="PR00301">
    <property type="entry name" value="HEATSHOCK70"/>
</dbReference>
<dbReference type="SUPFAM" id="SSF53067">
    <property type="entry name" value="Actin-like ATPase domain"/>
    <property type="match status" value="2"/>
</dbReference>
<dbReference type="SUPFAM" id="SSF100934">
    <property type="entry name" value="Heat shock protein 70kD (HSP70), C-terminal subdomain"/>
    <property type="match status" value="1"/>
</dbReference>
<dbReference type="SUPFAM" id="SSF100920">
    <property type="entry name" value="Heat shock protein 70kD (HSP70), peptide-binding domain"/>
    <property type="match status" value="1"/>
</dbReference>
<dbReference type="PROSITE" id="PS00297">
    <property type="entry name" value="HSP70_1"/>
    <property type="match status" value="1"/>
</dbReference>
<dbReference type="PROSITE" id="PS00329">
    <property type="entry name" value="HSP70_2"/>
    <property type="match status" value="1"/>
</dbReference>
<dbReference type="PROSITE" id="PS01036">
    <property type="entry name" value="HSP70_3"/>
    <property type="match status" value="1"/>
</dbReference>
<comment type="function">
    <text evidence="1">Acts as a chaperone.</text>
</comment>
<comment type="induction">
    <text evidence="1">By stress conditions e.g. heat shock.</text>
</comment>
<comment type="similarity">
    <text evidence="1">Belongs to the heat shock protein 70 family.</text>
</comment>
<reference key="1">
    <citation type="journal article" date="2005" name="Proc. Natl. Acad. Sci. U.S.A.">
        <title>The genome of the heartwater agent Ehrlichia ruminantium contains multiple tandem repeats of actively variable copy number.</title>
        <authorList>
            <person name="Collins N.E."/>
            <person name="Liebenberg J."/>
            <person name="de Villiers E.P."/>
            <person name="Brayton K.A."/>
            <person name="Louw E."/>
            <person name="Pretorius A."/>
            <person name="Faber F.E."/>
            <person name="van Heerden H."/>
            <person name="Josemans A."/>
            <person name="van Kleef M."/>
            <person name="Steyn H.C."/>
            <person name="van Strijp M.F."/>
            <person name="Zweygarth E."/>
            <person name="Jongejan F."/>
            <person name="Maillard J.C."/>
            <person name="Berthier D."/>
            <person name="Botha M."/>
            <person name="Joubert F."/>
            <person name="Corton C.H."/>
            <person name="Thomson N.R."/>
            <person name="Allsopp M.T."/>
            <person name="Allsopp B.A."/>
        </authorList>
    </citation>
    <scope>NUCLEOTIDE SEQUENCE [LARGE SCALE GENOMIC DNA]</scope>
    <source>
        <strain>Welgevonden</strain>
    </source>
</reference>
<reference key="2">
    <citation type="journal article" date="2006" name="J. Bacteriol.">
        <title>Comparative genomic analysis of three strains of Ehrlichia ruminantium reveals an active process of genome size plasticity.</title>
        <authorList>
            <person name="Frutos R."/>
            <person name="Viari A."/>
            <person name="Ferraz C."/>
            <person name="Morgat A."/>
            <person name="Eychenie S."/>
            <person name="Kandassamy Y."/>
            <person name="Chantal I."/>
            <person name="Bensaid A."/>
            <person name="Coissac E."/>
            <person name="Vachiery N."/>
            <person name="Demaille J."/>
            <person name="Martinez D."/>
        </authorList>
    </citation>
    <scope>NUCLEOTIDE SEQUENCE [LARGE SCALE GENOMIC DNA]</scope>
    <source>
        <strain>Welgevonden</strain>
    </source>
</reference>
<sequence length="645" mass="69985">MILCRGLFMAVIGIDLGTTNSCVAVMEGGDAKAIENSEGARTTPSIVAFTDSEVLVGDPAKRQATTNAKNTIYASKRLIGRRYQDTRDIKTSYDIVSAKNGDAWIKVRDKDYSPSQIGALILEKMKETAERHLGCKVEKAVITVPAYFDDAQRQATKDAGRIAGLDVIRIINEPTAAALAYGLNKSDKQKVIAVYDLGGGTFDVSILEIADGVFEVKSTNGDTMLGGEDFDHAIMEYLMDDFKKSTGIDLHSDAMAMQRIKEAAEKAKIELSSRMETDINLPFLSSDSTGPKHLSLKLTRATFENLVSDLVKRTIEPCKKALKDAGISADKIDEVVLVGGMTRVPKIIQTVKEFFGKEPHKGVNPDEVVAIGAAIQGGILAGDVRDVLLLDVTPLSLGIETLGGVFTPLIERNTTIPTKKSQVFSTAEDGQTAVTIKVFQGERKMANDNKLLGQFSLEGIPPAPRGMPQIEVTFDIDANGIVHVSAKDKASGKEQAIRIQSSGGLTDDEIQNMIKEAESKAEEDEKRKKFVEVKNNAENLVHSTEKSLKEHGDKISNADKLDIENAIRDLKDCISKDNIEDTDTMQNKLDHLMKVSMKLGEALYSNTNNATAGDNNTTDTGSSSNSDGSKVVDSDYQEIDKKDGK</sequence>
<organism>
    <name type="scientific">Ehrlichia ruminantium (strain Welgevonden)</name>
    <dbReference type="NCBI Taxonomy" id="254945"/>
    <lineage>
        <taxon>Bacteria</taxon>
        <taxon>Pseudomonadati</taxon>
        <taxon>Pseudomonadota</taxon>
        <taxon>Alphaproteobacteria</taxon>
        <taxon>Rickettsiales</taxon>
        <taxon>Anaplasmataceae</taxon>
        <taxon>Ehrlichia</taxon>
    </lineage>
</organism>
<gene>
    <name evidence="1" type="primary">dnaK</name>
    <name type="ordered locus">Erum5500</name>
    <name type="ordered locus">ERWE_CDS_05770</name>
</gene>
<protein>
    <recommendedName>
        <fullName evidence="1">Chaperone protein DnaK</fullName>
    </recommendedName>
    <alternativeName>
        <fullName evidence="1">HSP70</fullName>
    </alternativeName>
    <alternativeName>
        <fullName evidence="1">Heat shock 70 kDa protein</fullName>
    </alternativeName>
    <alternativeName>
        <fullName evidence="1">Heat shock protein 70</fullName>
    </alternativeName>
</protein>
<evidence type="ECO:0000255" key="1">
    <source>
        <dbReference type="HAMAP-Rule" id="MF_00332"/>
    </source>
</evidence>
<evidence type="ECO:0000256" key="2">
    <source>
        <dbReference type="SAM" id="MobiDB-lite"/>
    </source>
</evidence>
<accession>Q5HAY1</accession>
<accession>Q5FET1</accession>
<feature type="chain" id="PRO_0000225963" description="Chaperone protein DnaK">
    <location>
        <begin position="1"/>
        <end position="645"/>
    </location>
</feature>
<feature type="region of interest" description="Disordered" evidence="2">
    <location>
        <begin position="606"/>
        <end position="645"/>
    </location>
</feature>
<feature type="compositionally biased region" description="Low complexity" evidence="2">
    <location>
        <begin position="606"/>
        <end position="629"/>
    </location>
</feature>
<feature type="compositionally biased region" description="Basic and acidic residues" evidence="2">
    <location>
        <begin position="630"/>
        <end position="645"/>
    </location>
</feature>
<feature type="modified residue" description="Phosphothreonine; by autocatalysis" evidence="1">
    <location>
        <position position="201"/>
    </location>
</feature>
<keyword id="KW-0067">ATP-binding</keyword>
<keyword id="KW-0143">Chaperone</keyword>
<keyword id="KW-0547">Nucleotide-binding</keyword>
<keyword id="KW-0597">Phosphoprotein</keyword>
<keyword id="KW-0346">Stress response</keyword>
<proteinExistence type="inferred from homology"/>